<keyword id="KW-0030">Aminoacyl-tRNA synthetase</keyword>
<keyword id="KW-0067">ATP-binding</keyword>
<keyword id="KW-0963">Cytoplasm</keyword>
<keyword id="KW-0436">Ligase</keyword>
<keyword id="KW-0547">Nucleotide-binding</keyword>
<keyword id="KW-0648">Protein biosynthesis</keyword>
<keyword id="KW-1185">Reference proteome</keyword>
<sequence length="587" mass="65330">MRSHYCGDLRASHDGETVELCGWVSRRRDHGGVIFLDLRDRNGLVQVVFDPDTVDAFALADKVRSEYVVRLSGRVRMRDESVRNNKMATGDIEVLGKELTILNEAETPPFELDAHSAAGEEVRLKYRYMDLRRPDVLKNFQFRSRLTHVVRAFLEGEGFMDVETPILTRATPEGARDYLVPSRTHPGSFFALPQSPQLFKQLLMVAGFDRYYQIAKCFRDEDLRADRQPEFTQIDLEASFVEEEDIMGITERMVRSVFKELLSVDLPDFPRMPFSEAMQRFGSDKPDLRIALELIDIADLLAGVDFKVFSGPANDPKGRVAAMRVPGGCSLSRKDIDGYTKFVSIYGAKGLAYIKVNDLAAGAEGLQSPILKFLTEDAIKGILERTGAETGDLIFFGADKAKIVNEALGALRVKVGHDLNLVEGEWAPLWVVDFPMFEEDEGQYHALHHPFTMPSCSAEELKSNPGEALSRAYDMVLNGTELGGGSIRIHSPAMQRTVFEALGISDEEAEEKFGFLLDGLKYGAPPHGGLAFGLDRMVMLMTGCESIRDVIAFPKTQTAACTMTNAPSPVDNKQLREVGVQVRKEEG</sequence>
<gene>
    <name evidence="1" type="primary">aspS</name>
    <name type="ordered locus">ABO_0749</name>
</gene>
<dbReference type="EC" id="6.1.1.23" evidence="1"/>
<dbReference type="EMBL" id="AM286690">
    <property type="protein sequence ID" value="CAL16197.1"/>
    <property type="molecule type" value="Genomic_DNA"/>
</dbReference>
<dbReference type="RefSeq" id="WP_011588033.1">
    <property type="nucleotide sequence ID" value="NC_008260.1"/>
</dbReference>
<dbReference type="SMR" id="Q0VRK1"/>
<dbReference type="STRING" id="393595.ABO_0749"/>
<dbReference type="KEGG" id="abo:ABO_0749"/>
<dbReference type="eggNOG" id="COG0173">
    <property type="taxonomic scope" value="Bacteria"/>
</dbReference>
<dbReference type="HOGENOM" id="CLU_014330_3_2_6"/>
<dbReference type="OrthoDB" id="9802326at2"/>
<dbReference type="Proteomes" id="UP000008871">
    <property type="component" value="Chromosome"/>
</dbReference>
<dbReference type="GO" id="GO:0005737">
    <property type="term" value="C:cytoplasm"/>
    <property type="evidence" value="ECO:0007669"/>
    <property type="project" value="UniProtKB-SubCell"/>
</dbReference>
<dbReference type="GO" id="GO:0004815">
    <property type="term" value="F:aspartate-tRNA ligase activity"/>
    <property type="evidence" value="ECO:0007669"/>
    <property type="project" value="UniProtKB-UniRule"/>
</dbReference>
<dbReference type="GO" id="GO:0050560">
    <property type="term" value="F:aspartate-tRNA(Asn) ligase activity"/>
    <property type="evidence" value="ECO:0007669"/>
    <property type="project" value="UniProtKB-EC"/>
</dbReference>
<dbReference type="GO" id="GO:0005524">
    <property type="term" value="F:ATP binding"/>
    <property type="evidence" value="ECO:0007669"/>
    <property type="project" value="UniProtKB-UniRule"/>
</dbReference>
<dbReference type="GO" id="GO:0003676">
    <property type="term" value="F:nucleic acid binding"/>
    <property type="evidence" value="ECO:0007669"/>
    <property type="project" value="InterPro"/>
</dbReference>
<dbReference type="GO" id="GO:0006422">
    <property type="term" value="P:aspartyl-tRNA aminoacylation"/>
    <property type="evidence" value="ECO:0007669"/>
    <property type="project" value="UniProtKB-UniRule"/>
</dbReference>
<dbReference type="CDD" id="cd00777">
    <property type="entry name" value="AspRS_core"/>
    <property type="match status" value="1"/>
</dbReference>
<dbReference type="CDD" id="cd04317">
    <property type="entry name" value="EcAspRS_like_N"/>
    <property type="match status" value="1"/>
</dbReference>
<dbReference type="Gene3D" id="3.30.930.10">
    <property type="entry name" value="Bira Bifunctional Protein, Domain 2"/>
    <property type="match status" value="1"/>
</dbReference>
<dbReference type="Gene3D" id="3.30.1360.30">
    <property type="entry name" value="GAD-like domain"/>
    <property type="match status" value="1"/>
</dbReference>
<dbReference type="Gene3D" id="2.40.50.140">
    <property type="entry name" value="Nucleic acid-binding proteins"/>
    <property type="match status" value="1"/>
</dbReference>
<dbReference type="HAMAP" id="MF_00044">
    <property type="entry name" value="Asp_tRNA_synth_type1"/>
    <property type="match status" value="1"/>
</dbReference>
<dbReference type="InterPro" id="IPR004364">
    <property type="entry name" value="Aa-tRNA-synt_II"/>
</dbReference>
<dbReference type="InterPro" id="IPR006195">
    <property type="entry name" value="aa-tRNA-synth_II"/>
</dbReference>
<dbReference type="InterPro" id="IPR045864">
    <property type="entry name" value="aa-tRNA-synth_II/BPL/LPL"/>
</dbReference>
<dbReference type="InterPro" id="IPR004524">
    <property type="entry name" value="Asp-tRNA-ligase_1"/>
</dbReference>
<dbReference type="InterPro" id="IPR047089">
    <property type="entry name" value="Asp-tRNA-ligase_1_N"/>
</dbReference>
<dbReference type="InterPro" id="IPR002312">
    <property type="entry name" value="Asp/Asn-tRNA-synth_IIb"/>
</dbReference>
<dbReference type="InterPro" id="IPR047090">
    <property type="entry name" value="AspRS_core"/>
</dbReference>
<dbReference type="InterPro" id="IPR004115">
    <property type="entry name" value="GAD-like_sf"/>
</dbReference>
<dbReference type="InterPro" id="IPR029351">
    <property type="entry name" value="GAD_dom"/>
</dbReference>
<dbReference type="InterPro" id="IPR012340">
    <property type="entry name" value="NA-bd_OB-fold"/>
</dbReference>
<dbReference type="InterPro" id="IPR004365">
    <property type="entry name" value="NA-bd_OB_tRNA"/>
</dbReference>
<dbReference type="NCBIfam" id="TIGR00459">
    <property type="entry name" value="aspS_bact"/>
    <property type="match status" value="1"/>
</dbReference>
<dbReference type="NCBIfam" id="NF001750">
    <property type="entry name" value="PRK00476.1"/>
    <property type="match status" value="1"/>
</dbReference>
<dbReference type="PANTHER" id="PTHR22594:SF5">
    <property type="entry name" value="ASPARTATE--TRNA LIGASE, MITOCHONDRIAL"/>
    <property type="match status" value="1"/>
</dbReference>
<dbReference type="PANTHER" id="PTHR22594">
    <property type="entry name" value="ASPARTYL/LYSYL-TRNA SYNTHETASE"/>
    <property type="match status" value="1"/>
</dbReference>
<dbReference type="Pfam" id="PF02938">
    <property type="entry name" value="GAD"/>
    <property type="match status" value="1"/>
</dbReference>
<dbReference type="Pfam" id="PF00152">
    <property type="entry name" value="tRNA-synt_2"/>
    <property type="match status" value="1"/>
</dbReference>
<dbReference type="Pfam" id="PF01336">
    <property type="entry name" value="tRNA_anti-codon"/>
    <property type="match status" value="1"/>
</dbReference>
<dbReference type="PRINTS" id="PR01042">
    <property type="entry name" value="TRNASYNTHASP"/>
</dbReference>
<dbReference type="SUPFAM" id="SSF55681">
    <property type="entry name" value="Class II aaRS and biotin synthetases"/>
    <property type="match status" value="1"/>
</dbReference>
<dbReference type="SUPFAM" id="SSF55261">
    <property type="entry name" value="GAD domain-like"/>
    <property type="match status" value="1"/>
</dbReference>
<dbReference type="SUPFAM" id="SSF50249">
    <property type="entry name" value="Nucleic acid-binding proteins"/>
    <property type="match status" value="1"/>
</dbReference>
<dbReference type="PROSITE" id="PS50862">
    <property type="entry name" value="AA_TRNA_LIGASE_II"/>
    <property type="match status" value="1"/>
</dbReference>
<organism>
    <name type="scientific">Alcanivorax borkumensis (strain ATCC 700651 / DSM 11573 / NCIMB 13689 / SK2)</name>
    <dbReference type="NCBI Taxonomy" id="393595"/>
    <lineage>
        <taxon>Bacteria</taxon>
        <taxon>Pseudomonadati</taxon>
        <taxon>Pseudomonadota</taxon>
        <taxon>Gammaproteobacteria</taxon>
        <taxon>Oceanospirillales</taxon>
        <taxon>Alcanivoracaceae</taxon>
        <taxon>Alcanivorax</taxon>
    </lineage>
</organism>
<comment type="function">
    <text evidence="1">Aspartyl-tRNA synthetase with relaxed tRNA specificity since it is able to aspartylate not only its cognate tRNA(Asp) but also tRNA(Asn). Reaction proceeds in two steps: L-aspartate is first activated by ATP to form Asp-AMP and then transferred to the acceptor end of tRNA(Asp/Asn).</text>
</comment>
<comment type="catalytic activity">
    <reaction evidence="1">
        <text>tRNA(Asx) + L-aspartate + ATP = L-aspartyl-tRNA(Asx) + AMP + diphosphate</text>
        <dbReference type="Rhea" id="RHEA:18349"/>
        <dbReference type="Rhea" id="RHEA-COMP:9710"/>
        <dbReference type="Rhea" id="RHEA-COMP:9711"/>
        <dbReference type="ChEBI" id="CHEBI:29991"/>
        <dbReference type="ChEBI" id="CHEBI:30616"/>
        <dbReference type="ChEBI" id="CHEBI:33019"/>
        <dbReference type="ChEBI" id="CHEBI:78442"/>
        <dbReference type="ChEBI" id="CHEBI:78516"/>
        <dbReference type="ChEBI" id="CHEBI:456215"/>
        <dbReference type="EC" id="6.1.1.23"/>
    </reaction>
</comment>
<comment type="subunit">
    <text evidence="1">Homodimer.</text>
</comment>
<comment type="subcellular location">
    <subcellularLocation>
        <location evidence="1">Cytoplasm</location>
    </subcellularLocation>
</comment>
<comment type="similarity">
    <text evidence="1">Belongs to the class-II aminoacyl-tRNA synthetase family. Type 1 subfamily.</text>
</comment>
<name>SYDND_ALCBS</name>
<protein>
    <recommendedName>
        <fullName evidence="1">Aspartate--tRNA(Asp/Asn) ligase</fullName>
        <ecNumber evidence="1">6.1.1.23</ecNumber>
    </recommendedName>
    <alternativeName>
        <fullName evidence="1">Aspartyl-tRNA synthetase</fullName>
        <shortName evidence="1">AspRS</shortName>
    </alternativeName>
    <alternativeName>
        <fullName evidence="1">Non-discriminating aspartyl-tRNA synthetase</fullName>
        <shortName evidence="1">ND-AspRS</shortName>
    </alternativeName>
</protein>
<evidence type="ECO:0000255" key="1">
    <source>
        <dbReference type="HAMAP-Rule" id="MF_00044"/>
    </source>
</evidence>
<reference key="1">
    <citation type="journal article" date="2006" name="Nat. Biotechnol.">
        <title>Genome sequence of the ubiquitous hydrocarbon-degrading marine bacterium Alcanivorax borkumensis.</title>
        <authorList>
            <person name="Schneiker S."/>
            <person name="Martins dos Santos V.A.P."/>
            <person name="Bartels D."/>
            <person name="Bekel T."/>
            <person name="Brecht M."/>
            <person name="Buhrmester J."/>
            <person name="Chernikova T.N."/>
            <person name="Denaro R."/>
            <person name="Ferrer M."/>
            <person name="Gertler C."/>
            <person name="Goesmann A."/>
            <person name="Golyshina O.V."/>
            <person name="Kaminski F."/>
            <person name="Khachane A.N."/>
            <person name="Lang S."/>
            <person name="Linke B."/>
            <person name="McHardy A.C."/>
            <person name="Meyer F."/>
            <person name="Nechitaylo T."/>
            <person name="Puehler A."/>
            <person name="Regenhardt D."/>
            <person name="Rupp O."/>
            <person name="Sabirova J.S."/>
            <person name="Selbitschka W."/>
            <person name="Yakimov M.M."/>
            <person name="Timmis K.N."/>
            <person name="Vorhoelter F.-J."/>
            <person name="Weidner S."/>
            <person name="Kaiser O."/>
            <person name="Golyshin P.N."/>
        </authorList>
    </citation>
    <scope>NUCLEOTIDE SEQUENCE [LARGE SCALE GENOMIC DNA]</scope>
    <source>
        <strain>ATCC 700651 / DSM 11573 / NCIMB 13689 / SK2</strain>
    </source>
</reference>
<accession>Q0VRK1</accession>
<feature type="chain" id="PRO_1000006630" description="Aspartate--tRNA(Asp/Asn) ligase">
    <location>
        <begin position="1"/>
        <end position="587"/>
    </location>
</feature>
<feature type="region of interest" description="Aspartate" evidence="1">
    <location>
        <begin position="197"/>
        <end position="200"/>
    </location>
</feature>
<feature type="binding site" evidence="1">
    <location>
        <position position="173"/>
    </location>
    <ligand>
        <name>L-aspartate</name>
        <dbReference type="ChEBI" id="CHEBI:29991"/>
    </ligand>
</feature>
<feature type="binding site" evidence="1">
    <location>
        <begin position="219"/>
        <end position="221"/>
    </location>
    <ligand>
        <name>ATP</name>
        <dbReference type="ChEBI" id="CHEBI:30616"/>
    </ligand>
</feature>
<feature type="binding site" evidence="1">
    <location>
        <position position="219"/>
    </location>
    <ligand>
        <name>L-aspartate</name>
        <dbReference type="ChEBI" id="CHEBI:29991"/>
    </ligand>
</feature>
<feature type="binding site" evidence="1">
    <location>
        <position position="228"/>
    </location>
    <ligand>
        <name>ATP</name>
        <dbReference type="ChEBI" id="CHEBI:30616"/>
    </ligand>
</feature>
<feature type="binding site" evidence="1">
    <location>
        <position position="448"/>
    </location>
    <ligand>
        <name>L-aspartate</name>
        <dbReference type="ChEBI" id="CHEBI:29991"/>
    </ligand>
</feature>
<feature type="binding site" evidence="1">
    <location>
        <position position="481"/>
    </location>
    <ligand>
        <name>ATP</name>
        <dbReference type="ChEBI" id="CHEBI:30616"/>
    </ligand>
</feature>
<feature type="binding site" evidence="1">
    <location>
        <position position="488"/>
    </location>
    <ligand>
        <name>L-aspartate</name>
        <dbReference type="ChEBI" id="CHEBI:29991"/>
    </ligand>
</feature>
<feature type="binding site" evidence="1">
    <location>
        <begin position="533"/>
        <end position="536"/>
    </location>
    <ligand>
        <name>ATP</name>
        <dbReference type="ChEBI" id="CHEBI:30616"/>
    </ligand>
</feature>
<feature type="site" description="Important for tRNA non-discrimination" evidence="1">
    <location>
        <position position="30"/>
    </location>
</feature>
<proteinExistence type="inferred from homology"/>